<reference key="1">
    <citation type="journal article" date="1995" name="Virology">
        <title>The DNA sequence of human herpesvirus-6: structure, coding content, and genome evolution.</title>
        <authorList>
            <person name="Gompels U.A."/>
            <person name="Nicholas J."/>
            <person name="Lawrence G.L."/>
            <person name="Jones M."/>
            <person name="Thomson B.J."/>
            <person name="Martin M.E.D."/>
            <person name="Efstathiou S."/>
            <person name="Craxton M.A."/>
            <person name="Macaulay H.A."/>
        </authorList>
    </citation>
    <scope>NUCLEOTIDE SEQUENCE [LARGE SCALE GENOMIC DNA]</scope>
</reference>
<organismHost>
    <name type="scientific">Homo sapiens</name>
    <name type="common">Human</name>
    <dbReference type="NCBI Taxonomy" id="9606"/>
</organismHost>
<proteinExistence type="inferred from homology"/>
<name>DR2_HHV6U</name>
<protein>
    <recommendedName>
        <fullName>Uncharacterized protein DR2</fullName>
    </recommendedName>
</protein>
<gene>
    <name type="primary">DR2L</name>
</gene>
<gene>
    <name type="primary">DR2R</name>
</gene>
<organism>
    <name type="scientific">Human herpesvirus 6A (strain Uganda-1102)</name>
    <name type="common">HHV-6 variant A</name>
    <name type="synonym">Human B lymphotropic virus</name>
    <dbReference type="NCBI Taxonomy" id="10370"/>
    <lineage>
        <taxon>Viruses</taxon>
        <taxon>Duplodnaviria</taxon>
        <taxon>Heunggongvirae</taxon>
        <taxon>Peploviricota</taxon>
        <taxon>Herviviricetes</taxon>
        <taxon>Herpesvirales</taxon>
        <taxon>Orthoherpesviridae</taxon>
        <taxon>Betaherpesvirinae</taxon>
        <taxon>Roseolovirus</taxon>
        <taxon>Roseolovirus humanbeta6a</taxon>
        <taxon>Human betaherpesvirus 6A</taxon>
    </lineage>
</organism>
<evidence type="ECO:0000256" key="1">
    <source>
        <dbReference type="SAM" id="MobiDB-lite"/>
    </source>
</evidence>
<evidence type="ECO:0000305" key="2"/>
<sequence length="620" mass="67150">MIYCVLSTTPGTFWFPSGFDPKPYHPSADSKLLPLGLITLSACSTRVSATTRWSSFHATDPSLSWLTGSSPWLVILQGQGGSLFCHDVLQGRLYILSHSVSLFLKTGLRHCEAIYRAPLWRDRPLPSLWTCRDPDKAFLPTLLARSARRGLAAFYALWRLHLGSRSELSHPVLEWESTELVLTDWRRGRNEAQRDAPSVAEHFARCRPLLDELCGEGGWLPFAFLSTSPHVWLILTEGGPVLAVDVNDTSVWRIADDLELLRRLGSLLLLSGLRLPLRPPSGSGEAAGEPGYEEEERRGRASTASATAATSTRGPTRPTRVTRKGRVATGGVHLSARPESEEQTDGHHGRQESSDDHQRGGSGRGHRDDGAHRHANDKTEPQQRGEHEERKQTDSGRHEHAQESQVARRDEEETEQGDSERSCGGATQTYGGRGRHDSCPSIPLSVPGPDPRLWVPPPHLLFPSPLPPMTPVDDEPSVRPRCPPGPAEEPPTCRPRPPRPSSDTPLSAVSRPSAPPVPPPSTARVRFFLSSSSSSPSYSPAPLSPPSPVSPSSPRSPFIPPIRSPGLRAKPRVSSGHPAAFPPAPSSAPARSERVTSVPSSASPSASCVGKSQPPAAHTA</sequence>
<keyword id="KW-1185">Reference proteome</keyword>
<comment type="similarity">
    <text evidence="2">Belongs to the herpesviridae US22 family.</text>
</comment>
<accession>Q89893</accession>
<feature type="chain" id="PRO_0000342562" description="Uncharacterized protein DR2">
    <location>
        <begin position="1"/>
        <end position="620"/>
    </location>
</feature>
<feature type="region of interest" description="Disordered" evidence="1">
    <location>
        <begin position="278"/>
        <end position="620"/>
    </location>
</feature>
<feature type="compositionally biased region" description="Low complexity" evidence="1">
    <location>
        <begin position="278"/>
        <end position="290"/>
    </location>
</feature>
<feature type="compositionally biased region" description="Low complexity" evidence="1">
    <location>
        <begin position="301"/>
        <end position="319"/>
    </location>
</feature>
<feature type="compositionally biased region" description="Basic and acidic residues" evidence="1">
    <location>
        <begin position="336"/>
        <end position="411"/>
    </location>
</feature>
<feature type="compositionally biased region" description="Pro residues" evidence="1">
    <location>
        <begin position="446"/>
        <end position="470"/>
    </location>
</feature>
<feature type="compositionally biased region" description="Pro residues" evidence="1">
    <location>
        <begin position="481"/>
        <end position="500"/>
    </location>
</feature>
<feature type="compositionally biased region" description="Low complexity" evidence="1">
    <location>
        <begin position="501"/>
        <end position="512"/>
    </location>
</feature>
<feature type="compositionally biased region" description="Low complexity" evidence="1">
    <location>
        <begin position="522"/>
        <end position="541"/>
    </location>
</feature>
<feature type="compositionally biased region" description="Pro residues" evidence="1">
    <location>
        <begin position="542"/>
        <end position="551"/>
    </location>
</feature>
<feature type="compositionally biased region" description="Low complexity" evidence="1">
    <location>
        <begin position="597"/>
        <end position="607"/>
    </location>
</feature>
<dbReference type="EMBL" id="X83413">
    <property type="status" value="NOT_ANNOTATED_CDS"/>
    <property type="molecule type" value="Genomic_DNA"/>
</dbReference>
<dbReference type="Proteomes" id="UP000009295">
    <property type="component" value="Segment"/>
</dbReference>
<dbReference type="PRINTS" id="PR01217">
    <property type="entry name" value="PRICHEXTENSN"/>
</dbReference>